<proteinExistence type="inferred from homology"/>
<accession>Q5HEM3</accession>
<sequence length="475" mass="53657">MHFETVIGLEVHVELKTDSKMFSPSPAHFGAEPNSNTNVIDLAYPGVLPVVNKRAVDWAMRAAMALNMEIATESKFDRKNYFYPDNPKAYQISQFDQPIGENGYIDIEVDGETKRIGITRLHMEEDAGKSTHKGEYSLVDLNRQGTPLIEIVSEPDIRSPKEAYAYLEKLRSIIQYTGVSDVKMEEGSLRCDANISLRPYGQEKFGTKAELKNLNSFNYVRKGLEYEEKRQEEELLNGGEIGQETRRFDESTGKTILMRVKEGSDDYRYFPEPDIVPLYIDDAWKERVRQTIPELPDERKAKYVNELGLPAYDAHVLTLTKEMSDFFESTIEHGADVKLTSNWLMGGVNEYLNKNQVELLDTKLTPENLAGMIKLIEDGTMSSKIAKKVFPELAAKGGNAKQIMEDNGLVQISDEATLLKFVNEALDNNEQSVEDYKNGKGKAMGFLVGQIMKASKGQANPQLVNQLLKQELDKR</sequence>
<evidence type="ECO:0000255" key="1">
    <source>
        <dbReference type="HAMAP-Rule" id="MF_00121"/>
    </source>
</evidence>
<name>GATB_STAAC</name>
<feature type="chain" id="PRO_0000148833" description="Aspartyl/glutamyl-tRNA(Asn/Gln) amidotransferase subunit B">
    <location>
        <begin position="1"/>
        <end position="475"/>
    </location>
</feature>
<protein>
    <recommendedName>
        <fullName evidence="1">Aspartyl/glutamyl-tRNA(Asn/Gln) amidotransferase subunit B</fullName>
        <shortName evidence="1">Asp/Glu-ADT subunit B</shortName>
        <ecNumber evidence="1">6.3.5.-</ecNumber>
    </recommendedName>
</protein>
<reference key="1">
    <citation type="journal article" date="2005" name="J. Bacteriol.">
        <title>Insights on evolution of virulence and resistance from the complete genome analysis of an early methicillin-resistant Staphylococcus aureus strain and a biofilm-producing methicillin-resistant Staphylococcus epidermidis strain.</title>
        <authorList>
            <person name="Gill S.R."/>
            <person name="Fouts D.E."/>
            <person name="Archer G.L."/>
            <person name="Mongodin E.F."/>
            <person name="DeBoy R.T."/>
            <person name="Ravel J."/>
            <person name="Paulsen I.T."/>
            <person name="Kolonay J.F."/>
            <person name="Brinkac L.M."/>
            <person name="Beanan M.J."/>
            <person name="Dodson R.J."/>
            <person name="Daugherty S.C."/>
            <person name="Madupu R."/>
            <person name="Angiuoli S.V."/>
            <person name="Durkin A.S."/>
            <person name="Haft D.H."/>
            <person name="Vamathevan J.J."/>
            <person name="Khouri H."/>
            <person name="Utterback T.R."/>
            <person name="Lee C."/>
            <person name="Dimitrov G."/>
            <person name="Jiang L."/>
            <person name="Qin H."/>
            <person name="Weidman J."/>
            <person name="Tran K."/>
            <person name="Kang K.H."/>
            <person name="Hance I.R."/>
            <person name="Nelson K.E."/>
            <person name="Fraser C.M."/>
        </authorList>
    </citation>
    <scope>NUCLEOTIDE SEQUENCE [LARGE SCALE GENOMIC DNA]</scope>
    <source>
        <strain>COL</strain>
    </source>
</reference>
<comment type="function">
    <text evidence="1">Allows the formation of correctly charged Asn-tRNA(Asn) or Gln-tRNA(Gln) through the transamidation of misacylated Asp-tRNA(Asn) or Glu-tRNA(Gln) in organisms which lack either or both of asparaginyl-tRNA or glutaminyl-tRNA synthetases. The reaction takes place in the presence of glutamine and ATP through an activated phospho-Asp-tRNA(Asn) or phospho-Glu-tRNA(Gln).</text>
</comment>
<comment type="catalytic activity">
    <reaction evidence="1">
        <text>L-glutamyl-tRNA(Gln) + L-glutamine + ATP + H2O = L-glutaminyl-tRNA(Gln) + L-glutamate + ADP + phosphate + H(+)</text>
        <dbReference type="Rhea" id="RHEA:17521"/>
        <dbReference type="Rhea" id="RHEA-COMP:9681"/>
        <dbReference type="Rhea" id="RHEA-COMP:9684"/>
        <dbReference type="ChEBI" id="CHEBI:15377"/>
        <dbReference type="ChEBI" id="CHEBI:15378"/>
        <dbReference type="ChEBI" id="CHEBI:29985"/>
        <dbReference type="ChEBI" id="CHEBI:30616"/>
        <dbReference type="ChEBI" id="CHEBI:43474"/>
        <dbReference type="ChEBI" id="CHEBI:58359"/>
        <dbReference type="ChEBI" id="CHEBI:78520"/>
        <dbReference type="ChEBI" id="CHEBI:78521"/>
        <dbReference type="ChEBI" id="CHEBI:456216"/>
    </reaction>
</comment>
<comment type="catalytic activity">
    <reaction evidence="1">
        <text>L-aspartyl-tRNA(Asn) + L-glutamine + ATP + H2O = L-asparaginyl-tRNA(Asn) + L-glutamate + ADP + phosphate + 2 H(+)</text>
        <dbReference type="Rhea" id="RHEA:14513"/>
        <dbReference type="Rhea" id="RHEA-COMP:9674"/>
        <dbReference type="Rhea" id="RHEA-COMP:9677"/>
        <dbReference type="ChEBI" id="CHEBI:15377"/>
        <dbReference type="ChEBI" id="CHEBI:15378"/>
        <dbReference type="ChEBI" id="CHEBI:29985"/>
        <dbReference type="ChEBI" id="CHEBI:30616"/>
        <dbReference type="ChEBI" id="CHEBI:43474"/>
        <dbReference type="ChEBI" id="CHEBI:58359"/>
        <dbReference type="ChEBI" id="CHEBI:78515"/>
        <dbReference type="ChEBI" id="CHEBI:78516"/>
        <dbReference type="ChEBI" id="CHEBI:456216"/>
    </reaction>
</comment>
<comment type="subunit">
    <text evidence="1">Heterotrimer of A, B and C subunits.</text>
</comment>
<comment type="similarity">
    <text evidence="1">Belongs to the GatB/GatE family. GatB subfamily.</text>
</comment>
<keyword id="KW-0067">ATP-binding</keyword>
<keyword id="KW-0436">Ligase</keyword>
<keyword id="KW-0547">Nucleotide-binding</keyword>
<keyword id="KW-0648">Protein biosynthesis</keyword>
<organism>
    <name type="scientific">Staphylococcus aureus (strain COL)</name>
    <dbReference type="NCBI Taxonomy" id="93062"/>
    <lineage>
        <taxon>Bacteria</taxon>
        <taxon>Bacillati</taxon>
        <taxon>Bacillota</taxon>
        <taxon>Bacilli</taxon>
        <taxon>Bacillales</taxon>
        <taxon>Staphylococcaceae</taxon>
        <taxon>Staphylococcus</taxon>
    </lineage>
</organism>
<dbReference type="EC" id="6.3.5.-" evidence="1"/>
<dbReference type="EMBL" id="CP000046">
    <property type="protein sequence ID" value="AAW38400.1"/>
    <property type="molecule type" value="Genomic_DNA"/>
</dbReference>
<dbReference type="RefSeq" id="WP_000545370.1">
    <property type="nucleotide sequence ID" value="NZ_JBGOFO010000006.1"/>
</dbReference>
<dbReference type="SMR" id="Q5HEM3"/>
<dbReference type="KEGG" id="sac:SACOL1960"/>
<dbReference type="HOGENOM" id="CLU_019240_0_0_9"/>
<dbReference type="Proteomes" id="UP000000530">
    <property type="component" value="Chromosome"/>
</dbReference>
<dbReference type="GO" id="GO:0050566">
    <property type="term" value="F:asparaginyl-tRNA synthase (glutamine-hydrolyzing) activity"/>
    <property type="evidence" value="ECO:0007669"/>
    <property type="project" value="RHEA"/>
</dbReference>
<dbReference type="GO" id="GO:0005524">
    <property type="term" value="F:ATP binding"/>
    <property type="evidence" value="ECO:0007669"/>
    <property type="project" value="UniProtKB-KW"/>
</dbReference>
<dbReference type="GO" id="GO:0050567">
    <property type="term" value="F:glutaminyl-tRNA synthase (glutamine-hydrolyzing) activity"/>
    <property type="evidence" value="ECO:0007669"/>
    <property type="project" value="UniProtKB-UniRule"/>
</dbReference>
<dbReference type="GO" id="GO:0070681">
    <property type="term" value="P:glutaminyl-tRNAGln biosynthesis via transamidation"/>
    <property type="evidence" value="ECO:0007669"/>
    <property type="project" value="TreeGrafter"/>
</dbReference>
<dbReference type="GO" id="GO:0006412">
    <property type="term" value="P:translation"/>
    <property type="evidence" value="ECO:0007669"/>
    <property type="project" value="UniProtKB-UniRule"/>
</dbReference>
<dbReference type="FunFam" id="1.10.10.410:FF:000001">
    <property type="entry name" value="Aspartyl/glutamyl-tRNA(Asn/Gln) amidotransferase subunit B"/>
    <property type="match status" value="1"/>
</dbReference>
<dbReference type="FunFam" id="1.10.150.380:FF:000001">
    <property type="entry name" value="Aspartyl/glutamyl-tRNA(Asn/Gln) amidotransferase subunit B"/>
    <property type="match status" value="1"/>
</dbReference>
<dbReference type="Gene3D" id="1.10.10.410">
    <property type="match status" value="1"/>
</dbReference>
<dbReference type="Gene3D" id="1.10.150.380">
    <property type="entry name" value="GatB domain, N-terminal subdomain"/>
    <property type="match status" value="1"/>
</dbReference>
<dbReference type="HAMAP" id="MF_00121">
    <property type="entry name" value="GatB"/>
    <property type="match status" value="1"/>
</dbReference>
<dbReference type="InterPro" id="IPR017959">
    <property type="entry name" value="Asn/Gln-tRNA_amidoTrfase_suB/E"/>
</dbReference>
<dbReference type="InterPro" id="IPR006075">
    <property type="entry name" value="Asn/Gln-tRNA_Trfase_suB/E_cat"/>
</dbReference>
<dbReference type="InterPro" id="IPR018027">
    <property type="entry name" value="Asn/Gln_amidotransferase"/>
</dbReference>
<dbReference type="InterPro" id="IPR003789">
    <property type="entry name" value="Asn/Gln_tRNA_amidoTrase-B-like"/>
</dbReference>
<dbReference type="InterPro" id="IPR004413">
    <property type="entry name" value="GatB"/>
</dbReference>
<dbReference type="InterPro" id="IPR042114">
    <property type="entry name" value="GatB_C_1"/>
</dbReference>
<dbReference type="InterPro" id="IPR023168">
    <property type="entry name" value="GatB_Yqey_C_2"/>
</dbReference>
<dbReference type="InterPro" id="IPR017958">
    <property type="entry name" value="Gln-tRNA_amidoTrfase_suB_CS"/>
</dbReference>
<dbReference type="InterPro" id="IPR014746">
    <property type="entry name" value="Gln_synth/guanido_kin_cat_dom"/>
</dbReference>
<dbReference type="NCBIfam" id="TIGR00133">
    <property type="entry name" value="gatB"/>
    <property type="match status" value="1"/>
</dbReference>
<dbReference type="NCBIfam" id="NF004011">
    <property type="entry name" value="PRK05477.1-1"/>
    <property type="match status" value="1"/>
</dbReference>
<dbReference type="NCBIfam" id="NF004012">
    <property type="entry name" value="PRK05477.1-2"/>
    <property type="match status" value="1"/>
</dbReference>
<dbReference type="NCBIfam" id="NF004014">
    <property type="entry name" value="PRK05477.1-4"/>
    <property type="match status" value="1"/>
</dbReference>
<dbReference type="PANTHER" id="PTHR11659">
    <property type="entry name" value="GLUTAMYL-TRNA GLN AMIDOTRANSFERASE SUBUNIT B MITOCHONDRIAL AND PROKARYOTIC PET112-RELATED"/>
    <property type="match status" value="1"/>
</dbReference>
<dbReference type="PANTHER" id="PTHR11659:SF0">
    <property type="entry name" value="GLUTAMYL-TRNA(GLN) AMIDOTRANSFERASE SUBUNIT B, MITOCHONDRIAL"/>
    <property type="match status" value="1"/>
</dbReference>
<dbReference type="Pfam" id="PF02934">
    <property type="entry name" value="GatB_N"/>
    <property type="match status" value="1"/>
</dbReference>
<dbReference type="Pfam" id="PF02637">
    <property type="entry name" value="GatB_Yqey"/>
    <property type="match status" value="1"/>
</dbReference>
<dbReference type="SMART" id="SM00845">
    <property type="entry name" value="GatB_Yqey"/>
    <property type="match status" value="1"/>
</dbReference>
<dbReference type="SUPFAM" id="SSF89095">
    <property type="entry name" value="GatB/YqeY motif"/>
    <property type="match status" value="1"/>
</dbReference>
<dbReference type="SUPFAM" id="SSF55931">
    <property type="entry name" value="Glutamine synthetase/guanido kinase"/>
    <property type="match status" value="1"/>
</dbReference>
<dbReference type="PROSITE" id="PS01234">
    <property type="entry name" value="GATB"/>
    <property type="match status" value="1"/>
</dbReference>
<gene>
    <name evidence="1" type="primary">gatB</name>
    <name type="ordered locus">SACOL1960</name>
</gene>